<accession>A6VHU3</accession>
<gene>
    <name type="ordered locus">MmarC7_0952</name>
</gene>
<feature type="chain" id="PRO_0000378122" description="UPF0179 protein MmarC7_0952">
    <location>
        <begin position="1"/>
        <end position="145"/>
    </location>
</feature>
<reference key="1">
    <citation type="submission" date="2007-06" db="EMBL/GenBank/DDBJ databases">
        <title>Complete sequence of Methanococcus maripaludis C7.</title>
        <authorList>
            <consortium name="US DOE Joint Genome Institute"/>
            <person name="Copeland A."/>
            <person name="Lucas S."/>
            <person name="Lapidus A."/>
            <person name="Barry K."/>
            <person name="Glavina del Rio T."/>
            <person name="Dalin E."/>
            <person name="Tice H."/>
            <person name="Pitluck S."/>
            <person name="Clum A."/>
            <person name="Schmutz J."/>
            <person name="Larimer F."/>
            <person name="Land M."/>
            <person name="Hauser L."/>
            <person name="Kyrpides N."/>
            <person name="Anderson I."/>
            <person name="Sieprawska-Lupa M."/>
            <person name="Whitman W.B."/>
            <person name="Richardson P."/>
        </authorList>
    </citation>
    <scope>NUCLEOTIDE SEQUENCE [LARGE SCALE GENOMIC DNA]</scope>
    <source>
        <strain>C7 / ATCC BAA-1331</strain>
    </source>
</reference>
<evidence type="ECO:0000255" key="1">
    <source>
        <dbReference type="HAMAP-Rule" id="MF_00498"/>
    </source>
</evidence>
<protein>
    <recommendedName>
        <fullName evidence="1">UPF0179 protein MmarC7_0952</fullName>
    </recommendedName>
</protein>
<comment type="similarity">
    <text evidence="1">Belongs to the UPF0179 family.</text>
</comment>
<sequence length="145" mass="16197">MKKITLIGSELAKTGNEFIYLGPLEECEPCRFKRICHNNLDVGTRYKIVSVRSANHPCTVHENGVKVVEVMPAEFTIIIESKKALEGVTLTHVDVHCDRVCCENYLSCHPEGISGKYRVSSILPEKVECKKGNSLKKISIVPVQQ</sequence>
<proteinExistence type="inferred from homology"/>
<organism>
    <name type="scientific">Methanococcus maripaludis (strain C7 / ATCC BAA-1331)</name>
    <dbReference type="NCBI Taxonomy" id="426368"/>
    <lineage>
        <taxon>Archaea</taxon>
        <taxon>Methanobacteriati</taxon>
        <taxon>Methanobacteriota</taxon>
        <taxon>Methanomada group</taxon>
        <taxon>Methanococci</taxon>
        <taxon>Methanococcales</taxon>
        <taxon>Methanococcaceae</taxon>
        <taxon>Methanococcus</taxon>
    </lineage>
</organism>
<dbReference type="EMBL" id="CP000745">
    <property type="protein sequence ID" value="ABR66019.1"/>
    <property type="molecule type" value="Genomic_DNA"/>
</dbReference>
<dbReference type="STRING" id="426368.MmarC7_0952"/>
<dbReference type="KEGG" id="mmz:MmarC7_0952"/>
<dbReference type="eggNOG" id="arCOG04477">
    <property type="taxonomic scope" value="Archaea"/>
</dbReference>
<dbReference type="HOGENOM" id="CLU_121764_0_0_2"/>
<dbReference type="OrthoDB" id="24613at2157"/>
<dbReference type="HAMAP" id="MF_00498">
    <property type="entry name" value="UPF0179"/>
    <property type="match status" value="1"/>
</dbReference>
<dbReference type="InterPro" id="IPR005369">
    <property type="entry name" value="UPF0179"/>
</dbReference>
<dbReference type="PANTHER" id="PTHR40699">
    <property type="entry name" value="UPF0179 PROTEIN MJ1627"/>
    <property type="match status" value="1"/>
</dbReference>
<dbReference type="PANTHER" id="PTHR40699:SF1">
    <property type="entry name" value="UPF0179 PROTEIN MJ1627"/>
    <property type="match status" value="1"/>
</dbReference>
<dbReference type="Pfam" id="PF03684">
    <property type="entry name" value="UPF0179"/>
    <property type="match status" value="1"/>
</dbReference>
<dbReference type="PIRSF" id="PIRSF006595">
    <property type="entry name" value="UCP006595"/>
    <property type="match status" value="1"/>
</dbReference>
<name>Y952_METM7</name>